<proteinExistence type="evidence at transcript level"/>
<organism>
    <name type="scientific">Pongo abelii</name>
    <name type="common">Sumatran orangutan</name>
    <name type="synonym">Pongo pygmaeus abelii</name>
    <dbReference type="NCBI Taxonomy" id="9601"/>
    <lineage>
        <taxon>Eukaryota</taxon>
        <taxon>Metazoa</taxon>
        <taxon>Chordata</taxon>
        <taxon>Craniata</taxon>
        <taxon>Vertebrata</taxon>
        <taxon>Euteleostomi</taxon>
        <taxon>Mammalia</taxon>
        <taxon>Eutheria</taxon>
        <taxon>Euarchontoglires</taxon>
        <taxon>Primates</taxon>
        <taxon>Haplorrhini</taxon>
        <taxon>Catarrhini</taxon>
        <taxon>Hominidae</taxon>
        <taxon>Pongo</taxon>
    </lineage>
</organism>
<accession>Q5R9J1</accession>
<evidence type="ECO:0000250" key="1"/>
<evidence type="ECO:0000250" key="2">
    <source>
        <dbReference type="UniProtKB" id="Q9Y221"/>
    </source>
</evidence>
<evidence type="ECO:0000255" key="3">
    <source>
        <dbReference type="PROSITE-ProRule" id="PRU00161"/>
    </source>
</evidence>
<evidence type="ECO:0000305" key="4"/>
<reference key="1">
    <citation type="submission" date="2004-11" db="EMBL/GenBank/DDBJ databases">
        <authorList>
            <consortium name="The German cDNA consortium"/>
        </authorList>
    </citation>
    <scope>NUCLEOTIDE SEQUENCE [LARGE SCALE MRNA]</scope>
    <source>
        <tissue>Heart</tissue>
    </source>
</reference>
<dbReference type="EMBL" id="CR859396">
    <property type="protein sequence ID" value="CAH91569.1"/>
    <property type="molecule type" value="mRNA"/>
</dbReference>
<dbReference type="RefSeq" id="NP_001125922.1">
    <property type="nucleotide sequence ID" value="NM_001132450.1"/>
</dbReference>
<dbReference type="SMR" id="Q5R9J1"/>
<dbReference type="FunCoup" id="Q5R9J1">
    <property type="interactions" value="2495"/>
</dbReference>
<dbReference type="STRING" id="9601.ENSPPYP00000008471"/>
<dbReference type="Ensembl" id="ENSPPYT00000036117.1">
    <property type="protein sequence ID" value="ENSPPYP00000041059.1"/>
    <property type="gene ID" value="ENSPPYG00000036346.1"/>
</dbReference>
<dbReference type="GeneID" id="100172856"/>
<dbReference type="KEGG" id="pon:100172856"/>
<dbReference type="CTD" id="51388"/>
<dbReference type="eggNOG" id="KOG3492">
    <property type="taxonomic scope" value="Eukaryota"/>
</dbReference>
<dbReference type="GeneTree" id="ENSGT00950000182971"/>
<dbReference type="HOGENOM" id="CLU_097217_0_0_1"/>
<dbReference type="InParanoid" id="Q5R9J1"/>
<dbReference type="OMA" id="LISMGTC"/>
<dbReference type="OrthoDB" id="27490at2759"/>
<dbReference type="TreeFam" id="TF300081"/>
<dbReference type="Proteomes" id="UP000001595">
    <property type="component" value="Chromosome 16"/>
</dbReference>
<dbReference type="GO" id="GO:0005829">
    <property type="term" value="C:cytosol"/>
    <property type="evidence" value="ECO:0007669"/>
    <property type="project" value="Ensembl"/>
</dbReference>
<dbReference type="GO" id="GO:0005730">
    <property type="term" value="C:nucleolus"/>
    <property type="evidence" value="ECO:0007669"/>
    <property type="project" value="UniProtKB-SubCell"/>
</dbReference>
<dbReference type="GO" id="GO:0005654">
    <property type="term" value="C:nucleoplasm"/>
    <property type="evidence" value="ECO:0007669"/>
    <property type="project" value="Ensembl"/>
</dbReference>
<dbReference type="GO" id="GO:0003723">
    <property type="term" value="F:RNA binding"/>
    <property type="evidence" value="ECO:0007669"/>
    <property type="project" value="UniProtKB-KW"/>
</dbReference>
<dbReference type="GO" id="GO:0042255">
    <property type="term" value="P:ribosome assembly"/>
    <property type="evidence" value="ECO:0007669"/>
    <property type="project" value="InterPro"/>
</dbReference>
<dbReference type="CDD" id="cd21146">
    <property type="entry name" value="Nip7_N_euk"/>
    <property type="match status" value="1"/>
</dbReference>
<dbReference type="CDD" id="cd21151">
    <property type="entry name" value="PUA_Nip7-like"/>
    <property type="match status" value="1"/>
</dbReference>
<dbReference type="FunFam" id="2.30.130.10:FF:000002">
    <property type="entry name" value="60S ribosome subunit biogenesis protein NIP7 homolog"/>
    <property type="match status" value="1"/>
</dbReference>
<dbReference type="FunFam" id="3.10.450.220:FF:000001">
    <property type="entry name" value="60S ribosome subunit biogenesis protein NIP7 homolog"/>
    <property type="match status" value="1"/>
</dbReference>
<dbReference type="Gene3D" id="3.10.450.220">
    <property type="match status" value="1"/>
</dbReference>
<dbReference type="Gene3D" id="2.30.130.10">
    <property type="entry name" value="PUA domain"/>
    <property type="match status" value="1"/>
</dbReference>
<dbReference type="InterPro" id="IPR040598">
    <property type="entry name" value="NIP7_N"/>
</dbReference>
<dbReference type="InterPro" id="IPR055359">
    <property type="entry name" value="Nip7_N_euk"/>
</dbReference>
<dbReference type="InterPro" id="IPR002478">
    <property type="entry name" value="PUA"/>
</dbReference>
<dbReference type="InterPro" id="IPR015947">
    <property type="entry name" value="PUA-like_sf"/>
</dbReference>
<dbReference type="InterPro" id="IPR036974">
    <property type="entry name" value="PUA_sf"/>
</dbReference>
<dbReference type="InterPro" id="IPR016686">
    <property type="entry name" value="Ribosomal_synth_fac_NIP7"/>
</dbReference>
<dbReference type="InterPro" id="IPR005155">
    <property type="entry name" value="UPF0113_PUA"/>
</dbReference>
<dbReference type="PANTHER" id="PTHR23415">
    <property type="entry name" value="CYCLIN-DEPENDENT KINASES REGULATORY SUBUNIT/60S RIBOSOME SUBUNIT BIOGENESIS PROTEIN NIP7"/>
    <property type="match status" value="1"/>
</dbReference>
<dbReference type="Pfam" id="PF17833">
    <property type="entry name" value="pre-PUA_NIP7"/>
    <property type="match status" value="1"/>
</dbReference>
<dbReference type="Pfam" id="PF03657">
    <property type="entry name" value="UPF0113"/>
    <property type="match status" value="1"/>
</dbReference>
<dbReference type="PIRSF" id="PIRSF017190">
    <property type="entry name" value="Rbsml_synth_fac_NIP7"/>
    <property type="match status" value="1"/>
</dbReference>
<dbReference type="SMART" id="SM00359">
    <property type="entry name" value="PUA"/>
    <property type="match status" value="1"/>
</dbReference>
<dbReference type="SUPFAM" id="SSF88802">
    <property type="entry name" value="Pre-PUA domain"/>
    <property type="match status" value="1"/>
</dbReference>
<dbReference type="SUPFAM" id="SSF88697">
    <property type="entry name" value="PUA domain-like"/>
    <property type="match status" value="1"/>
</dbReference>
<dbReference type="PROSITE" id="PS50890">
    <property type="entry name" value="PUA"/>
    <property type="match status" value="1"/>
</dbReference>
<protein>
    <recommendedName>
        <fullName>60S ribosome subunit biogenesis protein NIP7 homolog</fullName>
    </recommendedName>
    <alternativeName>
        <fullName>Nucleolar pre-rRNA processing protein NIP7</fullName>
    </alternativeName>
</protein>
<sequence>MRPLTEEETRVMFEKIAKYIGENLQLLVDRPDGTYCFRLHNDRVYYVSEKIMKLAANISGDKLVSLGTCFGKFTKTHKFRLHVTALDYLAPYAKYKVWIKPGAEQSFLYGNHVLKSGLGRITENTSQYQGVVVYSMADIPLGFGVAAKSTQDCRKVDPMAIVVFHQADIGEYVRHEETLT</sequence>
<comment type="function">
    <text evidence="1">Required for proper 34S pre-rRNA processing and 60S ribosome subunit assembly.</text>
</comment>
<comment type="subunit">
    <text evidence="2">Monomer. Interacts with pre-ribosome complex. May bind to RNA. Interacts with NOL8. Interacts with FTSJ3 (By similarity). Interacts with DDX24 (By similarity).</text>
</comment>
<comment type="subcellular location">
    <subcellularLocation>
        <location evidence="1">Nucleus</location>
        <location evidence="1">Nucleolus</location>
    </subcellularLocation>
</comment>
<comment type="similarity">
    <text evidence="4">Belongs to the NIP7 family.</text>
</comment>
<gene>
    <name type="primary">NIP7</name>
</gene>
<name>NIP7_PONAB</name>
<keyword id="KW-0539">Nucleus</keyword>
<keyword id="KW-1185">Reference proteome</keyword>
<keyword id="KW-0690">Ribosome biogenesis</keyword>
<keyword id="KW-0694">RNA-binding</keyword>
<feature type="chain" id="PRO_0000250211" description="60S ribosome subunit biogenesis protein NIP7 homolog">
    <location>
        <begin position="1"/>
        <end position="180"/>
    </location>
</feature>
<feature type="domain" description="PUA" evidence="3">
    <location>
        <begin position="94"/>
        <end position="170"/>
    </location>
</feature>
<feature type="region of interest" description="N-terminal domain" evidence="1">
    <location>
        <begin position="1"/>
        <end position="92"/>
    </location>
</feature>
<feature type="region of interest" description="C-terminal domain" evidence="1">
    <location>
        <begin position="93"/>
        <end position="180"/>
    </location>
</feature>